<reference key="1">
    <citation type="submission" date="2008-02" db="EMBL/GenBank/DDBJ databases">
        <title>NISC comparative sequencing initiative.</title>
        <authorList>
            <person name="Antonellis A."/>
            <person name="Ayele K."/>
            <person name="Benjamin B."/>
            <person name="Blakesley R.W."/>
            <person name="Boakye A."/>
            <person name="Bouffard G.G."/>
            <person name="Brinkley C."/>
            <person name="Brooks S."/>
            <person name="Chu G."/>
            <person name="Coleman H."/>
            <person name="Engle J."/>
            <person name="Gestole M."/>
            <person name="Greene A."/>
            <person name="Guan X."/>
            <person name="Gupta J."/>
            <person name="Haghighi P."/>
            <person name="Han J."/>
            <person name="Hansen N."/>
            <person name="Ho S.-L."/>
            <person name="Hu P."/>
            <person name="Hunter G."/>
            <person name="Hurle B."/>
            <person name="Idol J.R."/>
            <person name="Kwong P."/>
            <person name="Laric P."/>
            <person name="Larson S."/>
            <person name="Lee-Lin S.-Q."/>
            <person name="Legaspi R."/>
            <person name="Madden M."/>
            <person name="Maduro Q.L."/>
            <person name="Maduro V.B."/>
            <person name="Margulies E.H."/>
            <person name="Masiello C."/>
            <person name="Maskeri B."/>
            <person name="McDowell J."/>
            <person name="Mojidi H.A."/>
            <person name="Mullikin J.C."/>
            <person name="Oestreicher J.S."/>
            <person name="Park M."/>
            <person name="Portnoy M.E."/>
            <person name="Prasad A."/>
            <person name="Puri O."/>
            <person name="Reddix-Dugue N."/>
            <person name="Schandler K."/>
            <person name="Schueler M.G."/>
            <person name="Sison C."/>
            <person name="Stantripop S."/>
            <person name="Stephen E."/>
            <person name="Taye A."/>
            <person name="Thomas J.W."/>
            <person name="Thomas P.J."/>
            <person name="Tsipouri V."/>
            <person name="Ung L."/>
            <person name="Vogt J.L."/>
            <person name="Wetherby K.D."/>
            <person name="Young A."/>
            <person name="Green E.D."/>
        </authorList>
    </citation>
    <scope>NUCLEOTIDE SEQUENCE [LARGE SCALE GENOMIC DNA]</scope>
</reference>
<keyword id="KW-0007">Acetylation</keyword>
<keyword id="KW-0131">Cell cycle</keyword>
<keyword id="KW-0132">Cell division</keyword>
<keyword id="KW-0156">Chromatin regulator</keyword>
<keyword id="KW-0963">Cytoplasm</keyword>
<keyword id="KW-0227">DNA damage</keyword>
<keyword id="KW-0234">DNA repair</keyword>
<keyword id="KW-0498">Mitosis</keyword>
<keyword id="KW-0539">Nucleus</keyword>
<keyword id="KW-0597">Phosphoprotein</keyword>
<keyword id="KW-1185">Reference proteome</keyword>
<keyword id="KW-0833">Ubl conjugation pathway</keyword>
<dbReference type="EMBL" id="DP000584">
    <property type="protein sequence ID" value="ABZ10512.1"/>
    <property type="status" value="ALT_SEQ"/>
    <property type="molecule type" value="Genomic_DNA"/>
</dbReference>
<dbReference type="SMR" id="B0KWQ2"/>
<dbReference type="FunCoup" id="B0KWQ2">
    <property type="interactions" value="4017"/>
</dbReference>
<dbReference type="STRING" id="9483.ENSCJAP00000017682"/>
<dbReference type="GeneID" id="100410892"/>
<dbReference type="KEGG" id="cjc:100410892"/>
<dbReference type="eggNOG" id="ENOG502QPZP">
    <property type="taxonomic scope" value="Eukaryota"/>
</dbReference>
<dbReference type="InParanoid" id="B0KWQ2"/>
<dbReference type="OrthoDB" id="1700726at2759"/>
<dbReference type="Proteomes" id="UP000008225">
    <property type="component" value="Unplaced"/>
</dbReference>
<dbReference type="GO" id="GO:0070531">
    <property type="term" value="C:BRCA1-A complex"/>
    <property type="evidence" value="ECO:0000250"/>
    <property type="project" value="UniProtKB"/>
</dbReference>
<dbReference type="GO" id="GO:0070552">
    <property type="term" value="C:BRISC complex"/>
    <property type="evidence" value="ECO:0000250"/>
    <property type="project" value="UniProtKB"/>
</dbReference>
<dbReference type="GO" id="GO:0005737">
    <property type="term" value="C:cytoplasm"/>
    <property type="evidence" value="ECO:0000250"/>
    <property type="project" value="UniProtKB"/>
</dbReference>
<dbReference type="GO" id="GO:0016604">
    <property type="term" value="C:nuclear body"/>
    <property type="evidence" value="ECO:0007669"/>
    <property type="project" value="TreeGrafter"/>
</dbReference>
<dbReference type="GO" id="GO:0005634">
    <property type="term" value="C:nucleus"/>
    <property type="evidence" value="ECO:0000250"/>
    <property type="project" value="UniProtKB"/>
</dbReference>
<dbReference type="GO" id="GO:0051301">
    <property type="term" value="P:cell division"/>
    <property type="evidence" value="ECO:0007669"/>
    <property type="project" value="UniProtKB-KW"/>
</dbReference>
<dbReference type="GO" id="GO:0140861">
    <property type="term" value="P:DNA repair-dependent chromatin remodeling"/>
    <property type="evidence" value="ECO:0000250"/>
    <property type="project" value="UniProtKB"/>
</dbReference>
<dbReference type="GO" id="GO:0006302">
    <property type="term" value="P:double-strand break repair"/>
    <property type="evidence" value="ECO:0000250"/>
    <property type="project" value="UniProtKB"/>
</dbReference>
<dbReference type="GO" id="GO:0007095">
    <property type="term" value="P:mitotic G2 DNA damage checkpoint signaling"/>
    <property type="evidence" value="ECO:0000250"/>
    <property type="project" value="UniProtKB"/>
</dbReference>
<dbReference type="GO" id="GO:0045739">
    <property type="term" value="P:positive regulation of DNA repair"/>
    <property type="evidence" value="ECO:0000250"/>
    <property type="project" value="UniProtKB"/>
</dbReference>
<dbReference type="GO" id="GO:0010212">
    <property type="term" value="P:response to ionizing radiation"/>
    <property type="evidence" value="ECO:0000250"/>
    <property type="project" value="UniProtKB"/>
</dbReference>
<dbReference type="CDD" id="cd21502">
    <property type="entry name" value="vWA_BABAM1"/>
    <property type="match status" value="1"/>
</dbReference>
<dbReference type="InterPro" id="IPR026126">
    <property type="entry name" value="BABAM1"/>
</dbReference>
<dbReference type="InterPro" id="IPR036465">
    <property type="entry name" value="vWFA_dom_sf"/>
</dbReference>
<dbReference type="PANTHER" id="PTHR15660">
    <property type="entry name" value="BRISC AND BRCA1-A COMPLEX MEMBER 1"/>
    <property type="match status" value="1"/>
</dbReference>
<dbReference type="PANTHER" id="PTHR15660:SF1">
    <property type="entry name" value="BRISC AND BRCA1-A COMPLEX MEMBER 1"/>
    <property type="match status" value="1"/>
</dbReference>
<dbReference type="SUPFAM" id="SSF53300">
    <property type="entry name" value="vWA-like"/>
    <property type="match status" value="1"/>
</dbReference>
<gene>
    <name type="primary">BABAM1</name>
    <name type="synonym">MERIT40</name>
    <name type="synonym">NBA1</name>
</gene>
<proteinExistence type="inferred from homology"/>
<accession>B0KWQ2</accession>
<comment type="function">
    <text evidence="2">Component of the BRCA1-A complex, a complex that specifically recognizes 'Lys-63'-linked ubiquitinated histones H2A and H2AX at DNA lesions sites, leading to target the BRCA1-BARD1 heterodimer to sites of DNA damage at double-strand breaks (DSBs). The BRCA1-A complex also possesses deubiquitinase activity that specifically removes 'Lys-63'-linked ubiquitin on histones H2A and H2AX. In the BRCA1-A complex, it is required for the complex integrity and its localization at DSBs. Component of the BRISC complex, a multiprotein complex that specifically cleaves 'Lys-63'-linked ubiquitin in various substrates. In these 2 complexes, it is probably required to maintain the stability of BABAM2 and help the 'Lys-63'-linked deubiquitinase activity mediated by BRCC3/BRCC36 component. The BRISC complex is required for normal mitotic spindle assembly and microtubule attachment to kinetochores via its role in deubiquitinating NUMA1. Plays a role in interferon signaling via its role in the deubiquitination of the interferon receptor IFNAR1; deubiquitination increases IFNAR1 activity by enhancing its stability and cell surface expression. Down-regulates the response to bacterial lipopolysaccharide (LPS) via its role in IFNAR1 deubiquitination.</text>
</comment>
<comment type="subunit">
    <text evidence="2">Component of the ARISC complex, at least composed of UIMC1/RAP80, ABRAXAS1, BRCC3/BRCC36, BABAM2 and BABAM1/NBA1. Component of the BRCA1-A complex, at least composed of BRCA1, BARD1, UIMC1/RAP80, ABRAXAS1, BRCC3/BRCC36, BABAM2 and BABAM1/NBA1. In the BRCA1-A complex, interacts directly with ABRAXAS1 and BABAM2. Component of the BRISC complex, at least composed of ABRAXAS2, BRCC3/BRCC36, BABAM2 and BABAM1/NBA1. Identified in a complex with SHMT2 and the other subunits of the BRISC complex.</text>
</comment>
<comment type="subcellular location">
    <subcellularLocation>
        <location evidence="2">Cytoplasm</location>
    </subcellularLocation>
    <subcellularLocation>
        <location evidence="2">Nucleus</location>
    </subcellularLocation>
    <text evidence="2">Localizes at sites of DNA damage at double-strand breaks (DSBs).</text>
</comment>
<comment type="domain">
    <text evidence="2">The VWFA-like region is similar to the VWFA domain. Its presence reveals similarities between the structure of the 19S proteasome and the BRCA1-A complexes.</text>
</comment>
<comment type="similarity">
    <text evidence="4">Belongs to the BABAM1 family.</text>
</comment>
<comment type="sequence caution" evidence="4">
    <conflict type="erroneous gene model prediction">
        <sequence resource="EMBL-CDS" id="ABZ10512"/>
    </conflict>
</comment>
<protein>
    <recommendedName>
        <fullName>BRISC and BRCA1-A complex member 1</fullName>
    </recommendedName>
    <alternativeName>
        <fullName>Mediator of RAP80 interactions and targeting subunit of 40 kDa</fullName>
    </alternativeName>
    <alternativeName>
        <fullName>New component of the BRCA1-A complex</fullName>
    </alternativeName>
</protein>
<organism>
    <name type="scientific">Callithrix jacchus</name>
    <name type="common">White-tufted-ear marmoset</name>
    <dbReference type="NCBI Taxonomy" id="9483"/>
    <lineage>
        <taxon>Eukaryota</taxon>
        <taxon>Metazoa</taxon>
        <taxon>Chordata</taxon>
        <taxon>Craniata</taxon>
        <taxon>Vertebrata</taxon>
        <taxon>Euteleostomi</taxon>
        <taxon>Mammalia</taxon>
        <taxon>Eutheria</taxon>
        <taxon>Euarchontoglires</taxon>
        <taxon>Primates</taxon>
        <taxon>Haplorrhini</taxon>
        <taxon>Platyrrhini</taxon>
        <taxon>Cebidae</taxon>
        <taxon>Callitrichinae</taxon>
        <taxon>Callithrix</taxon>
        <taxon>Callithrix</taxon>
    </lineage>
</organism>
<name>BABA1_CALJA</name>
<feature type="chain" id="PRO_0000373928" description="BRISC and BRCA1-A complex member 1">
    <location>
        <begin position="1"/>
        <end position="329"/>
    </location>
</feature>
<feature type="region of interest" description="Disordered" evidence="3">
    <location>
        <begin position="1"/>
        <end position="86"/>
    </location>
</feature>
<feature type="region of interest" description="VWFA-like">
    <location>
        <begin position="95"/>
        <end position="298"/>
    </location>
</feature>
<feature type="compositionally biased region" description="Acidic residues" evidence="3">
    <location>
        <begin position="10"/>
        <end position="19"/>
    </location>
</feature>
<feature type="modified residue" description="N-acetylmethionine" evidence="2">
    <location>
        <position position="1"/>
    </location>
</feature>
<feature type="modified residue" description="Phosphoserine" evidence="1">
    <location>
        <position position="8"/>
    </location>
</feature>
<feature type="modified residue" description="Phosphoserine" evidence="2">
    <location>
        <position position="29"/>
    </location>
</feature>
<feature type="modified residue" description="Phosphoserine" evidence="2">
    <location>
        <position position="49"/>
    </location>
</feature>
<feature type="modified residue" description="Phosphoserine" evidence="2">
    <location>
        <position position="57"/>
    </location>
</feature>
<feature type="modified residue" description="Phosphoserine" evidence="2">
    <location>
        <position position="62"/>
    </location>
</feature>
<feature type="modified residue" description="Phosphothreonine" evidence="2">
    <location>
        <position position="65"/>
    </location>
</feature>
<feature type="modified residue" description="Phosphoserine" evidence="2">
    <location>
        <position position="66"/>
    </location>
</feature>
<sequence length="329" mass="36541">MEVAEPSSPTEEEEEEEEHSAEPRPHTRSNPEGAEDRAVAAQASVGSHSEGEGEAASADDGSPSTSGAGPKSWQVPPPAPEVQIRTPRVNCPEKVIICLDLSEEMSLPKLESFNGSKTNALNISQKMIEMFVRTKHKIDKSHEFALVVVNDDTAWLSGLTSDPRELCSCLYDLETASCSTFNLEGLFSLIQQKTEFPVTENVQTIPPPYVVRTILVYSRPPCQPQFSLTEPMKKMFQCPYFFFDLVYIHNGAEEKEEEMSWKDMFAFMGSLDTKGTSYKYEVALAGPALELHNCMVKLLAHPLQRPCQSHASYSLLEEEDEATEVEATV</sequence>
<evidence type="ECO:0000250" key="1">
    <source>
        <dbReference type="UniProtKB" id="Q5XIJ6"/>
    </source>
</evidence>
<evidence type="ECO:0000250" key="2">
    <source>
        <dbReference type="UniProtKB" id="Q9NWV8"/>
    </source>
</evidence>
<evidence type="ECO:0000256" key="3">
    <source>
        <dbReference type="SAM" id="MobiDB-lite"/>
    </source>
</evidence>
<evidence type="ECO:0000305" key="4"/>